<reference key="1">
    <citation type="journal article" date="1983" name="Science">
        <title>Nucleotide sequence and expression of the diphtheria tox228 gene in Escherichia coli.</title>
        <authorList>
            <person name="Kaczorek M."/>
            <person name="Delpeyroux F."/>
            <person name="Chenciner N."/>
            <person name="Streeck R.E."/>
            <person name="Murphy J.R."/>
            <person name="Boquet P."/>
            <person name="Tiollais P."/>
        </authorList>
    </citation>
    <scope>NUCLEOTIDE SEQUENCE [GENOMIC DNA]</scope>
</reference>
<organismHost>
    <name type="scientific">Corynebacterium diphtheriae</name>
    <dbReference type="NCBI Taxonomy" id="1717"/>
</organismHost>
<organism>
    <name type="scientific">Corynephage beta</name>
    <dbReference type="NCBI Taxonomy" id="10703"/>
    <lineage>
        <taxon>Viruses</taxon>
        <taxon>Duplodnaviria</taxon>
        <taxon>Heunggongvirae</taxon>
        <taxon>Uroviricota</taxon>
        <taxon>Caudoviricetes</taxon>
        <taxon>Lambdavirus</taxon>
    </lineage>
</organism>
<dbReference type="EMBL" id="K01723">
    <property type="protein sequence ID" value="AAA32183.1"/>
    <property type="molecule type" value="Genomic_DNA"/>
</dbReference>
<dbReference type="BMRB" id="P00589"/>
<dbReference type="SMR" id="P00589"/>
<dbReference type="GO" id="GO:0005615">
    <property type="term" value="C:extracellular space"/>
    <property type="evidence" value="ECO:0007669"/>
    <property type="project" value="InterPro"/>
</dbReference>
<dbReference type="GO" id="GO:0047286">
    <property type="term" value="F:NAD+-diphthamide ADP-ribosyltransferase activity"/>
    <property type="evidence" value="ECO:0007669"/>
    <property type="project" value="InterPro"/>
</dbReference>
<dbReference type="GO" id="GO:0090729">
    <property type="term" value="F:toxin activity"/>
    <property type="evidence" value="ECO:0007669"/>
    <property type="project" value="InterPro"/>
</dbReference>
<dbReference type="FunFam" id="1.10.490.40:FF:000001">
    <property type="entry name" value="Diphtheria toxin"/>
    <property type="match status" value="1"/>
</dbReference>
<dbReference type="Gene3D" id="3.90.175.10">
    <property type="entry name" value="Diphtheria Toxin, domain 1"/>
    <property type="match status" value="1"/>
</dbReference>
<dbReference type="Gene3D" id="2.60.40.700">
    <property type="entry name" value="Diphtheria toxin, receptor-binding domain"/>
    <property type="match status" value="1"/>
</dbReference>
<dbReference type="Gene3D" id="1.10.490.40">
    <property type="entry name" value="Diphtheria toxin, translocation domain"/>
    <property type="match status" value="1"/>
</dbReference>
<dbReference type="InterPro" id="IPR036799">
    <property type="entry name" value="Diphtheria_tox_rcpt-bd_dom_sf"/>
</dbReference>
<dbReference type="InterPro" id="IPR036801">
    <property type="entry name" value="Diphtheria_tox_transloc_sf"/>
</dbReference>
<dbReference type="InterPro" id="IPR000512">
    <property type="entry name" value="Diphtheria_toxin"/>
</dbReference>
<dbReference type="InterPro" id="IPR022406">
    <property type="entry name" value="Diphtheria_toxin_catalytic_dom"/>
</dbReference>
<dbReference type="InterPro" id="IPR022404">
    <property type="entry name" value="Diphtheria_toxin_rcpt-bd_dom"/>
</dbReference>
<dbReference type="Pfam" id="PF02763">
    <property type="entry name" value="Diphtheria_C"/>
    <property type="match status" value="1"/>
</dbReference>
<dbReference type="Pfam" id="PF01324">
    <property type="entry name" value="Diphtheria_R"/>
    <property type="match status" value="1"/>
</dbReference>
<dbReference type="Pfam" id="PF02764">
    <property type="entry name" value="Diphtheria_T"/>
    <property type="match status" value="1"/>
</dbReference>
<dbReference type="PIRSF" id="PIRSF000490">
    <property type="entry name" value="Diphtheria_toxin"/>
    <property type="match status" value="1"/>
</dbReference>
<dbReference type="PRINTS" id="PR00769">
    <property type="entry name" value="DPTHRIATOXIN"/>
</dbReference>
<dbReference type="SUPFAM" id="SSF56399">
    <property type="entry name" value="ADP-ribosylation"/>
    <property type="match status" value="1"/>
</dbReference>
<dbReference type="SUPFAM" id="SSF49380">
    <property type="entry name" value="Diphtheria toxin, C-terminal domain"/>
    <property type="match status" value="1"/>
</dbReference>
<dbReference type="SUPFAM" id="SSF56845">
    <property type="entry name" value="Diphtheria toxin, middle domain"/>
    <property type="match status" value="1"/>
</dbReference>
<feature type="signal peptide">
    <location>
        <begin position="1"/>
        <end position="25"/>
    </location>
</feature>
<feature type="chain" id="PRO_0000019349" description="Diphtheria toxin homolog CRM228 fragment A">
    <location>
        <begin position="26"/>
        <end position="218"/>
    </location>
</feature>
<feature type="chain" id="PRO_0000019350" description="Diphtheria toxin homolog CRM228 fragment B">
    <location>
        <begin position="219"/>
        <end position="560"/>
    </location>
</feature>
<feature type="active site" evidence="1">
    <location>
        <position position="173"/>
    </location>
</feature>
<feature type="binding site" evidence="1">
    <location>
        <position position="46"/>
    </location>
    <ligand>
        <name>NAD(+)</name>
        <dbReference type="ChEBI" id="CHEBI:57540"/>
    </ligand>
</feature>
<feature type="binding site" evidence="1">
    <location>
        <position position="90"/>
    </location>
    <ligand>
        <name>NAD(+)</name>
        <dbReference type="ChEBI" id="CHEBI:57540"/>
    </ligand>
</feature>
<feature type="disulfide bond" evidence="1">
    <location>
        <begin position="211"/>
        <end position="226"/>
    </location>
</feature>
<feature type="disulfide bond" evidence="1">
    <location>
        <begin position="486"/>
        <end position="496"/>
    </location>
</feature>
<proteinExistence type="predicted"/>
<evidence type="ECO:0000250" key="1"/>
<comment type="miscellaneous">
    <text>This diphtheria toxin homolog is a nontoxic cross-reacting material (CRM) produced by a strain of corynephage beta that had undergone N-methyl-N'-nitro-N-nitrosoguanidine mutagenesis. This treatment induces guanine-adenine transitions in the DNA; the differences from the wild-type sequence at positions 104, 187, 222, 456 and 532 can be explained by such mutations. Either of the first 2 mutations will completely abolish all ADP-ribosylating activity of fragment A. The last 2 mutations may be responsible for the reduced receptor-binding capacity of this protein.</text>
</comment>
<comment type="miscellaneous">
    <text>In wild-type active diphtheria toxin, fragment A catalyzes the ADP-ribosylation of elongation factor 2 and blocks protein synthesis in eukaryotic cells; fragment B binds to the receptor protein and is necessary for the movement of fragment A into the cell.</text>
</comment>
<name>DTXH_CORBE</name>
<accession>P00589</accession>
<sequence length="560" mass="60921">MSRKLFASILIGALLGIGAPPSAHAGADDVVDSSKSFVMENFSSYHGTKPGYVDSIQKGIQKPKSGTQGNYDDDWKGFYSTDNKYDAAGYSVDNENPLSGKAGDVVKVTYPGLTKVLALKVDNAETIKKELGLSLTEPLMEQVGTEEFIKRFGDGASRVVLSLPFAEGSSSVEYINNWEQAKALSVKLEINFETRGKRGQDAMYEYMAQACAGNRVRRSVGGSLSCINLDWDVIRDKTKTKIESLKEHGPIKNKMSESPNKTVSEEKAKQYLEEFHQTALEHPELSELKTVTGTNRVFAGANYAAWAVNVAQVIDSETADNLEKTTAALSILPGIGSVMGIADGAVHHNTEEIVAQSIALSSLMVAQAIPLVGELVDIGFAAYNFVESIINLFQVVHNSYNRSAYSPGHKTQPFLHDGYAVSWNTVEDSIIRTGFQGESGHDIKITAENTPLPIASVLLPTIPGKLDVNKSKTHISVNGRKIRMRCRAIDGDVTFCRPKSPVYVGNGVHANLHVAFHRSSSEKIHSNEISSDSIGVLGYQKTVDHTKVNSKLSLFFEIKS</sequence>
<keyword id="KW-0165">Cleavage on pair of basic residues</keyword>
<keyword id="KW-1015">Disulfide bond</keyword>
<keyword id="KW-0732">Signal</keyword>
<protein>
    <recommendedName>
        <fullName>Diphtheria toxin homolog CRM228</fullName>
    </recommendedName>
    <component>
        <recommendedName>
            <fullName>Diphtheria toxin homolog CRM228 fragment A</fullName>
        </recommendedName>
    </component>
    <component>
        <recommendedName>
            <fullName>Diphtheria toxin homolog CRM228 fragment B</fullName>
        </recommendedName>
    </component>
</protein>